<dbReference type="EC" id="5.6.1.7" evidence="1"/>
<dbReference type="EMBL" id="AP008229">
    <property type="protein sequence ID" value="BAE70798.1"/>
    <property type="molecule type" value="Genomic_DNA"/>
</dbReference>
<dbReference type="RefSeq" id="WP_011260602.1">
    <property type="nucleotide sequence ID" value="NC_007705.1"/>
</dbReference>
<dbReference type="SMR" id="Q2NY29"/>
<dbReference type="KEGG" id="xom:XOO4043"/>
<dbReference type="HOGENOM" id="CLU_016503_3_0_6"/>
<dbReference type="GO" id="GO:0005737">
    <property type="term" value="C:cytoplasm"/>
    <property type="evidence" value="ECO:0007669"/>
    <property type="project" value="UniProtKB-SubCell"/>
</dbReference>
<dbReference type="GO" id="GO:0005524">
    <property type="term" value="F:ATP binding"/>
    <property type="evidence" value="ECO:0007669"/>
    <property type="project" value="UniProtKB-UniRule"/>
</dbReference>
<dbReference type="GO" id="GO:0140662">
    <property type="term" value="F:ATP-dependent protein folding chaperone"/>
    <property type="evidence" value="ECO:0007669"/>
    <property type="project" value="InterPro"/>
</dbReference>
<dbReference type="GO" id="GO:0016853">
    <property type="term" value="F:isomerase activity"/>
    <property type="evidence" value="ECO:0007669"/>
    <property type="project" value="UniProtKB-KW"/>
</dbReference>
<dbReference type="GO" id="GO:0051082">
    <property type="term" value="F:unfolded protein binding"/>
    <property type="evidence" value="ECO:0007669"/>
    <property type="project" value="UniProtKB-UniRule"/>
</dbReference>
<dbReference type="GO" id="GO:0042026">
    <property type="term" value="P:protein refolding"/>
    <property type="evidence" value="ECO:0007669"/>
    <property type="project" value="UniProtKB-UniRule"/>
</dbReference>
<dbReference type="CDD" id="cd03344">
    <property type="entry name" value="GroEL"/>
    <property type="match status" value="1"/>
</dbReference>
<dbReference type="FunFam" id="1.10.560.10:FF:000001">
    <property type="entry name" value="60 kDa chaperonin"/>
    <property type="match status" value="1"/>
</dbReference>
<dbReference type="FunFam" id="3.50.7.10:FF:000001">
    <property type="entry name" value="60 kDa chaperonin"/>
    <property type="match status" value="1"/>
</dbReference>
<dbReference type="Gene3D" id="3.50.7.10">
    <property type="entry name" value="GroEL"/>
    <property type="match status" value="1"/>
</dbReference>
<dbReference type="Gene3D" id="1.10.560.10">
    <property type="entry name" value="GroEL-like equatorial domain"/>
    <property type="match status" value="1"/>
</dbReference>
<dbReference type="Gene3D" id="3.30.260.10">
    <property type="entry name" value="TCP-1-like chaperonin intermediate domain"/>
    <property type="match status" value="1"/>
</dbReference>
<dbReference type="HAMAP" id="MF_00600">
    <property type="entry name" value="CH60"/>
    <property type="match status" value="1"/>
</dbReference>
<dbReference type="InterPro" id="IPR018370">
    <property type="entry name" value="Chaperonin_Cpn60_CS"/>
</dbReference>
<dbReference type="InterPro" id="IPR001844">
    <property type="entry name" value="Cpn60/GroEL"/>
</dbReference>
<dbReference type="InterPro" id="IPR002423">
    <property type="entry name" value="Cpn60/GroEL/TCP-1"/>
</dbReference>
<dbReference type="InterPro" id="IPR027409">
    <property type="entry name" value="GroEL-like_apical_dom_sf"/>
</dbReference>
<dbReference type="InterPro" id="IPR027413">
    <property type="entry name" value="GROEL-like_equatorial_sf"/>
</dbReference>
<dbReference type="InterPro" id="IPR027410">
    <property type="entry name" value="TCP-1-like_intermed_sf"/>
</dbReference>
<dbReference type="NCBIfam" id="TIGR02348">
    <property type="entry name" value="GroEL"/>
    <property type="match status" value="1"/>
</dbReference>
<dbReference type="NCBIfam" id="NF000592">
    <property type="entry name" value="PRK00013.1"/>
    <property type="match status" value="1"/>
</dbReference>
<dbReference type="NCBIfam" id="NF009487">
    <property type="entry name" value="PRK12849.1"/>
    <property type="match status" value="1"/>
</dbReference>
<dbReference type="NCBIfam" id="NF009488">
    <property type="entry name" value="PRK12850.1"/>
    <property type="match status" value="1"/>
</dbReference>
<dbReference type="NCBIfam" id="NF009489">
    <property type="entry name" value="PRK12851.1"/>
    <property type="match status" value="1"/>
</dbReference>
<dbReference type="PANTHER" id="PTHR45633">
    <property type="entry name" value="60 KDA HEAT SHOCK PROTEIN, MITOCHONDRIAL"/>
    <property type="match status" value="1"/>
</dbReference>
<dbReference type="Pfam" id="PF00118">
    <property type="entry name" value="Cpn60_TCP1"/>
    <property type="match status" value="1"/>
</dbReference>
<dbReference type="PRINTS" id="PR00298">
    <property type="entry name" value="CHAPERONIN60"/>
</dbReference>
<dbReference type="SUPFAM" id="SSF52029">
    <property type="entry name" value="GroEL apical domain-like"/>
    <property type="match status" value="1"/>
</dbReference>
<dbReference type="SUPFAM" id="SSF48592">
    <property type="entry name" value="GroEL equatorial domain-like"/>
    <property type="match status" value="1"/>
</dbReference>
<dbReference type="SUPFAM" id="SSF54849">
    <property type="entry name" value="GroEL-intermediate domain like"/>
    <property type="match status" value="1"/>
</dbReference>
<dbReference type="PROSITE" id="PS00296">
    <property type="entry name" value="CHAPERONINS_CPN60"/>
    <property type="match status" value="1"/>
</dbReference>
<proteinExistence type="inferred from homology"/>
<feature type="chain" id="PRO_0000257021" description="Chaperonin GroEL">
    <location>
        <begin position="1"/>
        <end position="546"/>
    </location>
</feature>
<feature type="region of interest" description="Disordered" evidence="2">
    <location>
        <begin position="526"/>
        <end position="546"/>
    </location>
</feature>
<feature type="compositionally biased region" description="Gly residues" evidence="2">
    <location>
        <begin position="534"/>
        <end position="546"/>
    </location>
</feature>
<feature type="binding site" evidence="1">
    <location>
        <begin position="30"/>
        <end position="33"/>
    </location>
    <ligand>
        <name>ATP</name>
        <dbReference type="ChEBI" id="CHEBI:30616"/>
    </ligand>
</feature>
<feature type="binding site" evidence="1">
    <location>
        <position position="51"/>
    </location>
    <ligand>
        <name>ATP</name>
        <dbReference type="ChEBI" id="CHEBI:30616"/>
    </ligand>
</feature>
<feature type="binding site" evidence="1">
    <location>
        <begin position="87"/>
        <end position="91"/>
    </location>
    <ligand>
        <name>ATP</name>
        <dbReference type="ChEBI" id="CHEBI:30616"/>
    </ligand>
</feature>
<feature type="binding site" evidence="1">
    <location>
        <position position="415"/>
    </location>
    <ligand>
        <name>ATP</name>
        <dbReference type="ChEBI" id="CHEBI:30616"/>
    </ligand>
</feature>
<feature type="binding site" evidence="1">
    <location>
        <begin position="479"/>
        <end position="481"/>
    </location>
    <ligand>
        <name>ATP</name>
        <dbReference type="ChEBI" id="CHEBI:30616"/>
    </ligand>
</feature>
<feature type="binding site" evidence="1">
    <location>
        <position position="495"/>
    </location>
    <ligand>
        <name>ATP</name>
        <dbReference type="ChEBI" id="CHEBI:30616"/>
    </ligand>
</feature>
<organism>
    <name type="scientific">Xanthomonas oryzae pv. oryzae (strain MAFF 311018)</name>
    <dbReference type="NCBI Taxonomy" id="342109"/>
    <lineage>
        <taxon>Bacteria</taxon>
        <taxon>Pseudomonadati</taxon>
        <taxon>Pseudomonadota</taxon>
        <taxon>Gammaproteobacteria</taxon>
        <taxon>Lysobacterales</taxon>
        <taxon>Lysobacteraceae</taxon>
        <taxon>Xanthomonas</taxon>
    </lineage>
</organism>
<accession>Q2NY29</accession>
<keyword id="KW-0067">ATP-binding</keyword>
<keyword id="KW-0143">Chaperone</keyword>
<keyword id="KW-0963">Cytoplasm</keyword>
<keyword id="KW-0413">Isomerase</keyword>
<keyword id="KW-0547">Nucleotide-binding</keyword>
<protein>
    <recommendedName>
        <fullName evidence="1">Chaperonin GroEL</fullName>
        <ecNumber evidence="1">5.6.1.7</ecNumber>
    </recommendedName>
    <alternativeName>
        <fullName evidence="1">60 kDa chaperonin</fullName>
    </alternativeName>
    <alternativeName>
        <fullName evidence="1">Chaperonin-60</fullName>
        <shortName evidence="1">Cpn60</shortName>
    </alternativeName>
</protein>
<evidence type="ECO:0000255" key="1">
    <source>
        <dbReference type="HAMAP-Rule" id="MF_00600"/>
    </source>
</evidence>
<evidence type="ECO:0000256" key="2">
    <source>
        <dbReference type="SAM" id="MobiDB-lite"/>
    </source>
</evidence>
<reference key="1">
    <citation type="journal article" date="2005" name="Jpn. Agric. Res. Q.">
        <title>Genome sequence of Xanthomonas oryzae pv. oryzae suggests contribution of large numbers of effector genes and insertion sequences to its race diversity.</title>
        <authorList>
            <person name="Ochiai H."/>
            <person name="Inoue Y."/>
            <person name="Takeya M."/>
            <person name="Sasaki A."/>
            <person name="Kaku H."/>
        </authorList>
    </citation>
    <scope>NUCLEOTIDE SEQUENCE [LARGE SCALE GENOMIC DNA]</scope>
    <source>
        <strain>MAFF 311018</strain>
    </source>
</reference>
<name>CH60_XANOM</name>
<sequence length="546" mass="57156">MAAKDIRFGEDARTRMVRGVNVLANAVKATLGPKGRNVVLEKSFGAPTITKDGVSVAKEIELADKFENMGAQMVKEVASKTNDNAGDGTTTATVLAQALIREGAKAVAAGMNPMDLKRGIDQAVKAAVVELKNISKPTTDDKAIAQVGTISANSDESIGNIIAEAMKKVGKEGVITVEEGSGLENELDVVEGMQFDRGYLSPYFINNQQSQSADLDDPFILLHDKKISNVRDLLPVLEGVAKAGKPLLIVAEEVEGEALATLVVNTIRGIVKVVAVKAPGFGDRRKAMLEDMAVLTGGTVISEEVGLALEKATIKDLGRAKKVQVSKENTTIIDGAGDSAAIESRVGQIKTQIEDTSSDYDREKLQERVAKLAGGVAVIKVGASTEIEMKEKKARVEDALHATRAAVEEGVVPGGGVALVRALVAVGNLTGANEDQTHGIQIALRAMEAPLREIVANAGEEPSVILNKVKEGTGNYGYNAANGEFGDMVEFGILDPTKVTRSALQNAASIAGLMITTEAMVADAPKKDEPAMPAGGGMGGMGGMDF</sequence>
<gene>
    <name evidence="1" type="primary">groEL</name>
    <name evidence="1" type="synonym">groL</name>
    <name type="ordered locus">XOO4043</name>
</gene>
<comment type="function">
    <text evidence="1">Together with its co-chaperonin GroES, plays an essential role in assisting protein folding. The GroEL-GroES system forms a nano-cage that allows encapsulation of the non-native substrate proteins and provides a physical environment optimized to promote and accelerate protein folding.</text>
</comment>
<comment type="catalytic activity">
    <reaction evidence="1">
        <text>ATP + H2O + a folded polypeptide = ADP + phosphate + an unfolded polypeptide.</text>
        <dbReference type="EC" id="5.6.1.7"/>
    </reaction>
</comment>
<comment type="subunit">
    <text evidence="1">Forms a cylinder of 14 subunits composed of two heptameric rings stacked back-to-back. Interacts with the co-chaperonin GroES.</text>
</comment>
<comment type="subcellular location">
    <subcellularLocation>
        <location evidence="1">Cytoplasm</location>
    </subcellularLocation>
</comment>
<comment type="similarity">
    <text evidence="1">Belongs to the chaperonin (HSP60) family.</text>
</comment>